<reference key="1">
    <citation type="submission" date="2001-04" db="EMBL/GenBank/DDBJ databases">
        <title>A murine homolog of the human FKBP6 gene, deleted in Williams-Beuren syndrome, is expressed in the embryonic structures involved in sensory cognition.</title>
        <authorList>
            <person name="Guimiot F."/>
            <person name="Mas C."/>
            <person name="Levacher B."/>
            <person name="Bourgeois F."/>
            <person name="Simonneau M."/>
        </authorList>
    </citation>
    <scope>NUCLEOTIDE SEQUENCE [MRNA] (ISOFORMS 1; 2 AND 3)</scope>
    <source>
        <tissue>Telencephalon</tissue>
        <tissue>Testis</tissue>
    </source>
</reference>
<reference key="2">
    <citation type="journal article" date="2005" name="Science">
        <title>The transcriptional landscape of the mammalian genome.</title>
        <authorList>
            <person name="Carninci P."/>
            <person name="Kasukawa T."/>
            <person name="Katayama S."/>
            <person name="Gough J."/>
            <person name="Frith M.C."/>
            <person name="Maeda N."/>
            <person name="Oyama R."/>
            <person name="Ravasi T."/>
            <person name="Lenhard B."/>
            <person name="Wells C."/>
            <person name="Kodzius R."/>
            <person name="Shimokawa K."/>
            <person name="Bajic V.B."/>
            <person name="Brenner S.E."/>
            <person name="Batalov S."/>
            <person name="Forrest A.R."/>
            <person name="Zavolan M."/>
            <person name="Davis M.J."/>
            <person name="Wilming L.G."/>
            <person name="Aidinis V."/>
            <person name="Allen J.E."/>
            <person name="Ambesi-Impiombato A."/>
            <person name="Apweiler R."/>
            <person name="Aturaliya R.N."/>
            <person name="Bailey T.L."/>
            <person name="Bansal M."/>
            <person name="Baxter L."/>
            <person name="Beisel K.W."/>
            <person name="Bersano T."/>
            <person name="Bono H."/>
            <person name="Chalk A.M."/>
            <person name="Chiu K.P."/>
            <person name="Choudhary V."/>
            <person name="Christoffels A."/>
            <person name="Clutterbuck D.R."/>
            <person name="Crowe M.L."/>
            <person name="Dalla E."/>
            <person name="Dalrymple B.P."/>
            <person name="de Bono B."/>
            <person name="Della Gatta G."/>
            <person name="di Bernardo D."/>
            <person name="Down T."/>
            <person name="Engstrom P."/>
            <person name="Fagiolini M."/>
            <person name="Faulkner G."/>
            <person name="Fletcher C.F."/>
            <person name="Fukushima T."/>
            <person name="Furuno M."/>
            <person name="Futaki S."/>
            <person name="Gariboldi M."/>
            <person name="Georgii-Hemming P."/>
            <person name="Gingeras T.R."/>
            <person name="Gojobori T."/>
            <person name="Green R.E."/>
            <person name="Gustincich S."/>
            <person name="Harbers M."/>
            <person name="Hayashi Y."/>
            <person name="Hensch T.K."/>
            <person name="Hirokawa N."/>
            <person name="Hill D."/>
            <person name="Huminiecki L."/>
            <person name="Iacono M."/>
            <person name="Ikeo K."/>
            <person name="Iwama A."/>
            <person name="Ishikawa T."/>
            <person name="Jakt M."/>
            <person name="Kanapin A."/>
            <person name="Katoh M."/>
            <person name="Kawasawa Y."/>
            <person name="Kelso J."/>
            <person name="Kitamura H."/>
            <person name="Kitano H."/>
            <person name="Kollias G."/>
            <person name="Krishnan S.P."/>
            <person name="Kruger A."/>
            <person name="Kummerfeld S.K."/>
            <person name="Kurochkin I.V."/>
            <person name="Lareau L.F."/>
            <person name="Lazarevic D."/>
            <person name="Lipovich L."/>
            <person name="Liu J."/>
            <person name="Liuni S."/>
            <person name="McWilliam S."/>
            <person name="Madan Babu M."/>
            <person name="Madera M."/>
            <person name="Marchionni L."/>
            <person name="Matsuda H."/>
            <person name="Matsuzawa S."/>
            <person name="Miki H."/>
            <person name="Mignone F."/>
            <person name="Miyake S."/>
            <person name="Morris K."/>
            <person name="Mottagui-Tabar S."/>
            <person name="Mulder N."/>
            <person name="Nakano N."/>
            <person name="Nakauchi H."/>
            <person name="Ng P."/>
            <person name="Nilsson R."/>
            <person name="Nishiguchi S."/>
            <person name="Nishikawa S."/>
            <person name="Nori F."/>
            <person name="Ohara O."/>
            <person name="Okazaki Y."/>
            <person name="Orlando V."/>
            <person name="Pang K.C."/>
            <person name="Pavan W.J."/>
            <person name="Pavesi G."/>
            <person name="Pesole G."/>
            <person name="Petrovsky N."/>
            <person name="Piazza S."/>
            <person name="Reed J."/>
            <person name="Reid J.F."/>
            <person name="Ring B.Z."/>
            <person name="Ringwald M."/>
            <person name="Rost B."/>
            <person name="Ruan Y."/>
            <person name="Salzberg S.L."/>
            <person name="Sandelin A."/>
            <person name="Schneider C."/>
            <person name="Schoenbach C."/>
            <person name="Sekiguchi K."/>
            <person name="Semple C.A."/>
            <person name="Seno S."/>
            <person name="Sessa L."/>
            <person name="Sheng Y."/>
            <person name="Shibata Y."/>
            <person name="Shimada H."/>
            <person name="Shimada K."/>
            <person name="Silva D."/>
            <person name="Sinclair B."/>
            <person name="Sperling S."/>
            <person name="Stupka E."/>
            <person name="Sugiura K."/>
            <person name="Sultana R."/>
            <person name="Takenaka Y."/>
            <person name="Taki K."/>
            <person name="Tammoja K."/>
            <person name="Tan S.L."/>
            <person name="Tang S."/>
            <person name="Taylor M.S."/>
            <person name="Tegner J."/>
            <person name="Teichmann S.A."/>
            <person name="Ueda H.R."/>
            <person name="van Nimwegen E."/>
            <person name="Verardo R."/>
            <person name="Wei C.L."/>
            <person name="Yagi K."/>
            <person name="Yamanishi H."/>
            <person name="Zabarovsky E."/>
            <person name="Zhu S."/>
            <person name="Zimmer A."/>
            <person name="Hide W."/>
            <person name="Bult C."/>
            <person name="Grimmond S.M."/>
            <person name="Teasdale R.D."/>
            <person name="Liu E.T."/>
            <person name="Brusic V."/>
            <person name="Quackenbush J."/>
            <person name="Wahlestedt C."/>
            <person name="Mattick J.S."/>
            <person name="Hume D.A."/>
            <person name="Kai C."/>
            <person name="Sasaki D."/>
            <person name="Tomaru Y."/>
            <person name="Fukuda S."/>
            <person name="Kanamori-Katayama M."/>
            <person name="Suzuki M."/>
            <person name="Aoki J."/>
            <person name="Arakawa T."/>
            <person name="Iida J."/>
            <person name="Imamura K."/>
            <person name="Itoh M."/>
            <person name="Kato T."/>
            <person name="Kawaji H."/>
            <person name="Kawagashira N."/>
            <person name="Kawashima T."/>
            <person name="Kojima M."/>
            <person name="Kondo S."/>
            <person name="Konno H."/>
            <person name="Nakano K."/>
            <person name="Ninomiya N."/>
            <person name="Nishio T."/>
            <person name="Okada M."/>
            <person name="Plessy C."/>
            <person name="Shibata K."/>
            <person name="Shiraki T."/>
            <person name="Suzuki S."/>
            <person name="Tagami M."/>
            <person name="Waki K."/>
            <person name="Watahiki A."/>
            <person name="Okamura-Oho Y."/>
            <person name="Suzuki H."/>
            <person name="Kawai J."/>
            <person name="Hayashizaki Y."/>
        </authorList>
    </citation>
    <scope>NUCLEOTIDE SEQUENCE [LARGE SCALE MRNA] (ISOFORM 3)</scope>
</reference>
<reference key="3">
    <citation type="journal article" date="2009" name="PLoS Biol.">
        <title>Lineage-specific biology revealed by a finished genome assembly of the mouse.</title>
        <authorList>
            <person name="Church D.M."/>
            <person name="Goodstadt L."/>
            <person name="Hillier L.W."/>
            <person name="Zody M.C."/>
            <person name="Goldstein S."/>
            <person name="She X."/>
            <person name="Bult C.J."/>
            <person name="Agarwala R."/>
            <person name="Cherry J.L."/>
            <person name="DiCuccio M."/>
            <person name="Hlavina W."/>
            <person name="Kapustin Y."/>
            <person name="Meric P."/>
            <person name="Maglott D."/>
            <person name="Birtle Z."/>
            <person name="Marques A.C."/>
            <person name="Graves T."/>
            <person name="Zhou S."/>
            <person name="Teague B."/>
            <person name="Potamousis K."/>
            <person name="Churas C."/>
            <person name="Place M."/>
            <person name="Herschleb J."/>
            <person name="Runnheim R."/>
            <person name="Forrest D."/>
            <person name="Amos-Landgraf J."/>
            <person name="Schwartz D.C."/>
            <person name="Cheng Z."/>
            <person name="Lindblad-Toh K."/>
            <person name="Eichler E.E."/>
            <person name="Ponting C.P."/>
        </authorList>
    </citation>
    <scope>NUCLEOTIDE SEQUENCE [LARGE SCALE GENOMIC DNA]</scope>
    <source>
        <strain>C57BL/6J</strain>
    </source>
</reference>
<reference key="4">
    <citation type="submission" date="2005-07" db="EMBL/GenBank/DDBJ databases">
        <authorList>
            <person name="Mural R.J."/>
            <person name="Adams M.D."/>
            <person name="Myers E.W."/>
            <person name="Smith H.O."/>
            <person name="Venter J.C."/>
        </authorList>
    </citation>
    <scope>NUCLEOTIDE SEQUENCE [LARGE SCALE GENOMIC DNA]</scope>
</reference>
<reference key="5">
    <citation type="journal article" date="2004" name="Genome Res.">
        <title>The status, quality, and expansion of the NIH full-length cDNA project: the Mammalian Gene Collection (MGC).</title>
        <authorList>
            <consortium name="The MGC Project Team"/>
        </authorList>
    </citation>
    <scope>NUCLEOTIDE SEQUENCE [LARGE SCALE MRNA] (ISOFORM 3)</scope>
    <source>
        <tissue>Testis</tissue>
    </source>
</reference>
<reference key="6">
    <citation type="journal article" date="2003" name="Science">
        <title>Essential role of Fkbp6 in male fertility and homologous chromosome pairing in meiosis.</title>
        <authorList>
            <person name="Crackower M.A."/>
            <person name="Kolas N.K."/>
            <person name="Noguchi J."/>
            <person name="Sarao R."/>
            <person name="Kikuchi K."/>
            <person name="Kaneko H."/>
            <person name="Kobayashi E."/>
            <person name="Kawai Y."/>
            <person name="Kozieradzki I."/>
            <person name="Landers R."/>
            <person name="Mo R."/>
            <person name="Hui C.C."/>
            <person name="Nieves E."/>
            <person name="Cohen P.E."/>
            <person name="Osborne L.R."/>
            <person name="Wada T."/>
            <person name="Kunieda T."/>
            <person name="Moens P.B."/>
            <person name="Penninger J.M."/>
        </authorList>
    </citation>
    <scope>FUNCTION</scope>
    <scope>DISRUPTION PHENOTYPE</scope>
    <scope>SUBCELLULAR LOCATION</scope>
    <scope>TISSUE SPECIFICITY</scope>
    <scope>DEVELOPMENTAL STAGE</scope>
</reference>
<reference key="7">
    <citation type="journal article" date="2008" name="J. Reprod. Dev.">
        <title>Affected homologous chromosome pairing and phosphorylation of testis specific histone, H2AX, in male meiosis under FKBP6 deficiency.</title>
        <authorList>
            <person name="Noguchi J."/>
            <person name="Ozawa M."/>
            <person name="Nakai M."/>
            <person name="Somfai T."/>
            <person name="Kikuchi K."/>
            <person name="Kaneko H."/>
            <person name="Kunieda T."/>
        </authorList>
    </citation>
    <scope>FUNCTION</scope>
</reference>
<reference key="8">
    <citation type="journal article" date="2010" name="Cell">
        <title>A tissue-specific atlas of mouse protein phosphorylation and expression.</title>
        <authorList>
            <person name="Huttlin E.L."/>
            <person name="Jedrychowski M.P."/>
            <person name="Elias J.E."/>
            <person name="Goswami T."/>
            <person name="Rad R."/>
            <person name="Beausoleil S.A."/>
            <person name="Villen J."/>
            <person name="Haas W."/>
            <person name="Sowa M.E."/>
            <person name="Gygi S.P."/>
        </authorList>
    </citation>
    <scope>IDENTIFICATION BY MASS SPECTROMETRY [LARGE SCALE ANALYSIS]</scope>
    <source>
        <tissue>Testis</tissue>
    </source>
</reference>
<reference key="9">
    <citation type="journal article" date="2012" name="Mol. Cell">
        <title>A role for Fkbp6 and the chaperone machinery in piRNA amplification and transposon silencing.</title>
        <authorList>
            <person name="Xiol J."/>
            <person name="Cora E."/>
            <person name="Koglgruber R."/>
            <person name="Chuma S."/>
            <person name="Subramanian S."/>
            <person name="Hosokawa M."/>
            <person name="Reuter M."/>
            <person name="Yang Z."/>
            <person name="Berninger P."/>
            <person name="Palencia A."/>
            <person name="Benes V."/>
            <person name="Penninger J."/>
            <person name="Sachidanandam R."/>
            <person name="Pillai R.S."/>
        </authorList>
    </citation>
    <scope>FUNCTION</scope>
    <scope>SUBCELLULAR LOCATION</scope>
    <scope>INTERACTION WITH HSP90</scope>
    <scope>DISRUPTION PHENOTYPE</scope>
    <scope>MUTAGENESIS OF LYS-254</scope>
</reference>
<feature type="chain" id="PRO_0000075330" description="Inactive peptidyl-prolyl cis-trans isomerase FKBP6">
    <location>
        <begin position="1"/>
        <end position="327"/>
    </location>
</feature>
<feature type="domain" description="PPIase FKBP-type" evidence="2">
    <location>
        <begin position="54"/>
        <end position="143"/>
    </location>
</feature>
<feature type="repeat" description="TPR 1">
    <location>
        <begin position="171"/>
        <end position="204"/>
    </location>
</feature>
<feature type="repeat" description="TPR 2">
    <location>
        <begin position="219"/>
        <end position="252"/>
    </location>
</feature>
<feature type="repeat" description="TPR 3">
    <location>
        <begin position="253"/>
        <end position="286"/>
    </location>
</feature>
<feature type="splice variant" id="VSP_005185" description="In isoform 2 and isoform 3." evidence="6 7 8">
    <original>MGGSTRDPGALEGAGILG</original>
    <variation>MSVFSRLRNGIPPSRDDC</variation>
    <location>
        <begin position="1"/>
        <end position="18"/>
    </location>
</feature>
<feature type="splice variant" id="VSP_005186" description="In isoform 2." evidence="8">
    <location>
        <begin position="157"/>
        <end position="196"/>
    </location>
</feature>
<feature type="mutagenesis site" description="Abolishes interaction with HSP90." evidence="5">
    <original>K</original>
    <variation>A</variation>
    <location>
        <position position="254"/>
    </location>
</feature>
<feature type="sequence conflict" description="In Ref. 2; BAC41058." evidence="9" ref="2">
    <original>Q</original>
    <variation>H</variation>
    <location>
        <position position="19"/>
    </location>
</feature>
<evidence type="ECO:0000250" key="1"/>
<evidence type="ECO:0000255" key="2">
    <source>
        <dbReference type="PROSITE-ProRule" id="PRU00277"/>
    </source>
</evidence>
<evidence type="ECO:0000269" key="3">
    <source>
    </source>
</evidence>
<evidence type="ECO:0000269" key="4">
    <source>
    </source>
</evidence>
<evidence type="ECO:0000269" key="5">
    <source>
    </source>
</evidence>
<evidence type="ECO:0000303" key="6">
    <source>
    </source>
</evidence>
<evidence type="ECO:0000303" key="7">
    <source>
    </source>
</evidence>
<evidence type="ECO:0000303" key="8">
    <source ref="1"/>
</evidence>
<evidence type="ECO:0000305" key="9"/>
<evidence type="ECO:0000305" key="10">
    <source>
    </source>
</evidence>
<proteinExistence type="evidence at protein level"/>
<comment type="function">
    <text evidence="3 4 5">Co-chaperone required during spermatogenesis to repress transposable elements and prevent their mobilization, which is essential for the germline integrity. Acts via the piRNA metabolic process, which mediates the repression of transposable elements during meiosis by forming complexes composed of piRNAs and Piwi proteins and govern the methylation and subsequent repression of transposons. Acts as a co-chaperone via its interaction with HSP90 and is required for the piRNA amplification process, the secondary piRNA biogenesis. May be required together with HSP90 in removal of 16 nucleotide ping-pong by-products from Piwi complexes, possibly facilitating turnover of Piwi complexes.</text>
</comment>
<comment type="subunit">
    <text evidence="1 5">Interacts with HSP72/HSPA2 and CLTC. Interacts with GAPDH; leading to inhibit GAPDH catalytic activity (By similarity). Interacts (via TPR repeats) with HSP90.</text>
</comment>
<comment type="subcellular location">
    <subcellularLocation>
        <location evidence="3 5">Cytoplasm</location>
        <location evidence="3 5">Cytosol</location>
    </subcellularLocation>
    <subcellularLocation>
        <location evidence="3">Nucleus</location>
    </subcellularLocation>
    <subcellularLocation>
        <location evidence="3">Chromosome</location>
    </subcellularLocation>
    <text evidence="3 5">Does not localize to pi-bodies. Localizes to meiotic chromosome cores and regions of homologous chromosome synapsis (synaptonemal complex).</text>
</comment>
<comment type="alternative products">
    <event type="alternative splicing"/>
    <isoform>
        <id>Q91XW8-1</id>
        <name>1</name>
        <sequence type="displayed"/>
    </isoform>
    <isoform>
        <id>Q91XW8-2</id>
        <name>2</name>
        <sequence type="described" ref="VSP_005185 VSP_005186"/>
    </isoform>
    <isoform>
        <id>Q91XW8-3</id>
        <name>3</name>
        <sequence type="described" ref="VSP_005185"/>
    </isoform>
</comment>
<comment type="tissue specificity">
    <text evidence="3">Testis-specific.</text>
</comment>
<comment type="developmental stage">
    <text evidence="3">Present in spermatocytes. Expression is lost as cells exit prophase I. Not detected in spermatids (at protein level).</text>
</comment>
<comment type="disruption phenotype">
    <text evidence="3 5">Males mice are sterile and aspermic due to abnormal pachytene spermatocytes, characterized by the appearance of unusual inclusion bodies and dense compacted nuclei. Spermatocytes fail to proceed beyond the pachytene stage due to abnormal pairing and misalignments between homologous chromosomes, non-homologous partner switches and autosynapsis of X chromosome cores in meiotic spermatocytes. No other abnormalities are detected in any tissues of males. Females mice are fertile (PubMed:12764197). Spermatocytes show derepressed LINE-1 retrotransposon and reduced DNA methylation due to deficient nuclear accumulation of Miwi2 (PubMed:22902560).</text>
</comment>
<comment type="similarity">
    <text evidence="9">Belongs to the FKBP6 family.</text>
</comment>
<comment type="caution">
    <text evidence="10">Although it contains a PPIase FKBP-type domain, does not show peptidyl-prolyl cis-trans isomerase activity.</text>
</comment>
<name>FKBP6_MOUSE</name>
<organism>
    <name type="scientific">Mus musculus</name>
    <name type="common">Mouse</name>
    <dbReference type="NCBI Taxonomy" id="10090"/>
    <lineage>
        <taxon>Eukaryota</taxon>
        <taxon>Metazoa</taxon>
        <taxon>Chordata</taxon>
        <taxon>Craniata</taxon>
        <taxon>Vertebrata</taxon>
        <taxon>Euteleostomi</taxon>
        <taxon>Mammalia</taxon>
        <taxon>Eutheria</taxon>
        <taxon>Euarchontoglires</taxon>
        <taxon>Glires</taxon>
        <taxon>Rodentia</taxon>
        <taxon>Myomorpha</taxon>
        <taxon>Muroidea</taxon>
        <taxon>Muridae</taxon>
        <taxon>Murinae</taxon>
        <taxon>Mus</taxon>
        <taxon>Mus</taxon>
    </lineage>
</organism>
<accession>Q91XW8</accession>
<accession>Q8C1Y1</accession>
<accession>Q91VB7</accession>
<accession>Q91Y30</accession>
<dbReference type="EMBL" id="AY029192">
    <property type="protein sequence ID" value="AAK39645.1"/>
    <property type="molecule type" value="mRNA"/>
</dbReference>
<dbReference type="EMBL" id="AF367709">
    <property type="protein sequence ID" value="AAK53411.1"/>
    <property type="molecule type" value="mRNA"/>
</dbReference>
<dbReference type="EMBL" id="AF367710">
    <property type="protein sequence ID" value="AAK53412.1"/>
    <property type="molecule type" value="mRNA"/>
</dbReference>
<dbReference type="EMBL" id="AF367711">
    <property type="protein sequence ID" value="AAK53413.1"/>
    <property type="molecule type" value="mRNA"/>
</dbReference>
<dbReference type="EMBL" id="AK090036">
    <property type="protein sequence ID" value="BAC41058.1"/>
    <property type="molecule type" value="mRNA"/>
</dbReference>
<dbReference type="EMBL" id="AC074359">
    <property type="status" value="NOT_ANNOTATED_CDS"/>
    <property type="molecule type" value="Genomic_DNA"/>
</dbReference>
<dbReference type="EMBL" id="CH466529">
    <property type="protein sequence ID" value="EDL19373.1"/>
    <property type="molecule type" value="Genomic_DNA"/>
</dbReference>
<dbReference type="EMBL" id="CH466529">
    <property type="protein sequence ID" value="EDL19374.1"/>
    <property type="molecule type" value="Genomic_DNA"/>
</dbReference>
<dbReference type="EMBL" id="BC139092">
    <property type="protein sequence ID" value="AAI39093.1"/>
    <property type="molecule type" value="mRNA"/>
</dbReference>
<dbReference type="EMBL" id="BC139097">
    <property type="protein sequence ID" value="AAI39098.1"/>
    <property type="molecule type" value="mRNA"/>
</dbReference>
<dbReference type="CCDS" id="CCDS19738.1">
    <molecule id="Q91XW8-3"/>
</dbReference>
<dbReference type="CCDS" id="CCDS80425.1">
    <molecule id="Q91XW8-1"/>
</dbReference>
<dbReference type="CCDS" id="CCDS80426.1">
    <molecule id="Q91XW8-2"/>
</dbReference>
<dbReference type="RefSeq" id="NP_001264820.1">
    <molecule id="Q91XW8-3"/>
    <property type="nucleotide sequence ID" value="NM_001277891.1"/>
</dbReference>
<dbReference type="RefSeq" id="NP_001264821.1">
    <molecule id="Q91XW8-1"/>
    <property type="nucleotide sequence ID" value="NM_001277892.2"/>
</dbReference>
<dbReference type="RefSeq" id="NP_001264822.1">
    <molecule id="Q91XW8-2"/>
    <property type="nucleotide sequence ID" value="NM_001277893.1"/>
</dbReference>
<dbReference type="RefSeq" id="NP_291049.1">
    <molecule id="Q91XW8-3"/>
    <property type="nucleotide sequence ID" value="NM_033571.3"/>
</dbReference>
<dbReference type="RefSeq" id="XP_011239215.1">
    <molecule id="Q91XW8-3"/>
    <property type="nucleotide sequence ID" value="XM_011240913.2"/>
</dbReference>
<dbReference type="RefSeq" id="XP_011239217.1">
    <molecule id="Q91XW8-2"/>
    <property type="nucleotide sequence ID" value="XM_011240915.1"/>
</dbReference>
<dbReference type="RefSeq" id="XP_017176679.1">
    <property type="nucleotide sequence ID" value="XM_017321190.1"/>
</dbReference>
<dbReference type="RefSeq" id="XP_030110809.1">
    <molecule id="Q91XW8-3"/>
    <property type="nucleotide sequence ID" value="XM_030254949.1"/>
</dbReference>
<dbReference type="RefSeq" id="XP_030110811.1">
    <molecule id="Q91XW8-3"/>
    <property type="nucleotide sequence ID" value="XM_030254951.1"/>
</dbReference>
<dbReference type="RefSeq" id="XP_030110812.1">
    <molecule id="Q91XW8-2"/>
    <property type="nucleotide sequence ID" value="XM_030254952.1"/>
</dbReference>
<dbReference type="SMR" id="Q91XW8"/>
<dbReference type="BioGRID" id="220490">
    <property type="interactions" value="5"/>
</dbReference>
<dbReference type="FunCoup" id="Q91XW8">
    <property type="interactions" value="999"/>
</dbReference>
<dbReference type="STRING" id="10090.ENSMUSP00000043193"/>
<dbReference type="iPTMnet" id="Q91XW8"/>
<dbReference type="PhosphoSitePlus" id="Q91XW8"/>
<dbReference type="SwissPalm" id="Q91XW8"/>
<dbReference type="PaxDb" id="10090-ENSMUSP00000043193"/>
<dbReference type="ProteomicsDB" id="271895">
    <molecule id="Q91XW8-1"/>
</dbReference>
<dbReference type="ProteomicsDB" id="272920">
    <molecule id="Q91XW8-2"/>
</dbReference>
<dbReference type="ProteomicsDB" id="272921">
    <molecule id="Q91XW8-3"/>
</dbReference>
<dbReference type="Antibodypedia" id="7933">
    <property type="antibodies" value="278 antibodies from 29 providers"/>
</dbReference>
<dbReference type="DNASU" id="94244"/>
<dbReference type="Ensembl" id="ENSMUST00000044972.11">
    <molecule id="Q91XW8-3"/>
    <property type="protein sequence ID" value="ENSMUSP00000043193.8"/>
    <property type="gene ID" value="ENSMUSG00000040013.12"/>
</dbReference>
<dbReference type="Ensembl" id="ENSMUST00000201534.2">
    <molecule id="Q91XW8-3"/>
    <property type="protein sequence ID" value="ENSMUSP00000144471.2"/>
    <property type="gene ID" value="ENSMUSG00000040013.12"/>
</dbReference>
<dbReference type="Ensembl" id="ENSMUST00000201784.4">
    <molecule id="Q91XW8-1"/>
    <property type="protein sequence ID" value="ENSMUSP00000144381.2"/>
    <property type="gene ID" value="ENSMUSG00000040013.12"/>
</dbReference>
<dbReference type="Ensembl" id="ENSMUST00000201791.4">
    <molecule id="Q91XW8-2"/>
    <property type="protein sequence ID" value="ENSMUSP00000144460.2"/>
    <property type="gene ID" value="ENSMUSG00000040013.12"/>
</dbReference>
<dbReference type="GeneID" id="94244"/>
<dbReference type="KEGG" id="mmu:94244"/>
<dbReference type="UCSC" id="uc008zyb.2">
    <molecule id="Q91XW8-3"/>
    <property type="organism name" value="mouse"/>
</dbReference>
<dbReference type="UCSC" id="uc008zyc.2">
    <molecule id="Q91XW8-2"/>
    <property type="organism name" value="mouse"/>
</dbReference>
<dbReference type="UCSC" id="uc008zyd.1">
    <molecule id="Q91XW8-1"/>
    <property type="organism name" value="mouse"/>
</dbReference>
<dbReference type="AGR" id="MGI:2137612"/>
<dbReference type="CTD" id="8468"/>
<dbReference type="MGI" id="MGI:2137612">
    <property type="gene designation" value="Fkbp6"/>
</dbReference>
<dbReference type="VEuPathDB" id="HostDB:ENSMUSG00000040013"/>
<dbReference type="eggNOG" id="KOG0543">
    <property type="taxonomic scope" value="Eukaryota"/>
</dbReference>
<dbReference type="GeneTree" id="ENSGT00940000158514"/>
<dbReference type="InParanoid" id="Q91XW8"/>
<dbReference type="OMA" id="CHRMFTP"/>
<dbReference type="PhylomeDB" id="Q91XW8"/>
<dbReference type="TreeFam" id="TF354214"/>
<dbReference type="BioGRID-ORCS" id="94244">
    <property type="hits" value="1 hit in 78 CRISPR screens"/>
</dbReference>
<dbReference type="ChiTaRS" id="Fkbp6">
    <property type="organism name" value="mouse"/>
</dbReference>
<dbReference type="PRO" id="PR:Q91XW8"/>
<dbReference type="Proteomes" id="UP000000589">
    <property type="component" value="Chromosome 5"/>
</dbReference>
<dbReference type="RNAct" id="Q91XW8">
    <property type="molecule type" value="protein"/>
</dbReference>
<dbReference type="Bgee" id="ENSMUSG00000040013">
    <property type="expression patterns" value="Expressed in blastoderm cell in morula and 25 other cell types or tissues"/>
</dbReference>
<dbReference type="GO" id="GO:0005737">
    <property type="term" value="C:cytoplasm"/>
    <property type="evidence" value="ECO:0000314"/>
    <property type="project" value="UniProtKB"/>
</dbReference>
<dbReference type="GO" id="GO:0005829">
    <property type="term" value="C:cytosol"/>
    <property type="evidence" value="ECO:0000314"/>
    <property type="project" value="UniProtKB"/>
</dbReference>
<dbReference type="GO" id="GO:0001650">
    <property type="term" value="C:fibrillar center"/>
    <property type="evidence" value="ECO:0007669"/>
    <property type="project" value="Ensembl"/>
</dbReference>
<dbReference type="GO" id="GO:0045171">
    <property type="term" value="C:intercellular bridge"/>
    <property type="evidence" value="ECO:0007669"/>
    <property type="project" value="Ensembl"/>
</dbReference>
<dbReference type="GO" id="GO:0015630">
    <property type="term" value="C:microtubule cytoskeleton"/>
    <property type="evidence" value="ECO:0007669"/>
    <property type="project" value="Ensembl"/>
</dbReference>
<dbReference type="GO" id="GO:0005654">
    <property type="term" value="C:nucleoplasm"/>
    <property type="evidence" value="ECO:0000304"/>
    <property type="project" value="Reactome"/>
</dbReference>
<dbReference type="GO" id="GO:0000795">
    <property type="term" value="C:synaptonemal complex"/>
    <property type="evidence" value="ECO:0000314"/>
    <property type="project" value="UniProtKB"/>
</dbReference>
<dbReference type="GO" id="GO:0051879">
    <property type="term" value="F:Hsp90 protein binding"/>
    <property type="evidence" value="ECO:0000314"/>
    <property type="project" value="UniProtKB"/>
</dbReference>
<dbReference type="GO" id="GO:0042802">
    <property type="term" value="F:identical protein binding"/>
    <property type="evidence" value="ECO:0007669"/>
    <property type="project" value="Ensembl"/>
</dbReference>
<dbReference type="GO" id="GO:0030154">
    <property type="term" value="P:cell differentiation"/>
    <property type="evidence" value="ECO:0007669"/>
    <property type="project" value="UniProtKB-KW"/>
</dbReference>
<dbReference type="GO" id="GO:0051321">
    <property type="term" value="P:meiotic cell cycle"/>
    <property type="evidence" value="ECO:0000315"/>
    <property type="project" value="UniProtKB"/>
</dbReference>
<dbReference type="GO" id="GO:0034587">
    <property type="term" value="P:piRNA processing"/>
    <property type="evidence" value="ECO:0000315"/>
    <property type="project" value="UniProtKB"/>
</dbReference>
<dbReference type="GO" id="GO:0045070">
    <property type="term" value="P:positive regulation of viral genome replication"/>
    <property type="evidence" value="ECO:0007669"/>
    <property type="project" value="Ensembl"/>
</dbReference>
<dbReference type="GO" id="GO:0006457">
    <property type="term" value="P:protein folding"/>
    <property type="evidence" value="ECO:0000315"/>
    <property type="project" value="UniProtKB"/>
</dbReference>
<dbReference type="GO" id="GO:0031047">
    <property type="term" value="P:regulatory ncRNA-mediated gene silencing"/>
    <property type="evidence" value="ECO:0000315"/>
    <property type="project" value="UniProtKB"/>
</dbReference>
<dbReference type="GO" id="GO:0007283">
    <property type="term" value="P:spermatogenesis"/>
    <property type="evidence" value="ECO:0000315"/>
    <property type="project" value="UniProtKB"/>
</dbReference>
<dbReference type="GO" id="GO:0141196">
    <property type="term" value="P:transposable element silencing by piRNA-mediated DNA methylation"/>
    <property type="evidence" value="ECO:0000315"/>
    <property type="project" value="UniProtKB"/>
</dbReference>
<dbReference type="FunFam" id="1.25.40.10:FF:000160">
    <property type="entry name" value="Peptidylprolyl isomerase"/>
    <property type="match status" value="1"/>
</dbReference>
<dbReference type="FunFam" id="3.10.50.40:FF:000030">
    <property type="entry name" value="Peptidylprolyl isomerase"/>
    <property type="match status" value="1"/>
</dbReference>
<dbReference type="Gene3D" id="3.10.50.40">
    <property type="match status" value="1"/>
</dbReference>
<dbReference type="Gene3D" id="1.25.40.10">
    <property type="entry name" value="Tetratricopeptide repeat domain"/>
    <property type="match status" value="1"/>
</dbReference>
<dbReference type="InterPro" id="IPR042282">
    <property type="entry name" value="FKBP6/shu"/>
</dbReference>
<dbReference type="InterPro" id="IPR046357">
    <property type="entry name" value="PPIase_dom_sf"/>
</dbReference>
<dbReference type="InterPro" id="IPR001179">
    <property type="entry name" value="PPIase_FKBP_dom"/>
</dbReference>
<dbReference type="InterPro" id="IPR011990">
    <property type="entry name" value="TPR-like_helical_dom_sf"/>
</dbReference>
<dbReference type="InterPro" id="IPR019734">
    <property type="entry name" value="TPR_rpt"/>
</dbReference>
<dbReference type="PANTHER" id="PTHR46674">
    <property type="entry name" value="INACTIVE PEPTIDYL-PROLYL CIS-TRANS ISOMERASE FKBP6"/>
    <property type="match status" value="1"/>
</dbReference>
<dbReference type="PANTHER" id="PTHR46674:SF1">
    <property type="entry name" value="INACTIVE PEPTIDYL-PROLYL CIS-TRANS ISOMERASE FKBP6"/>
    <property type="match status" value="1"/>
</dbReference>
<dbReference type="Pfam" id="PF00254">
    <property type="entry name" value="FKBP_C"/>
    <property type="match status" value="1"/>
</dbReference>
<dbReference type="SMART" id="SM00028">
    <property type="entry name" value="TPR"/>
    <property type="match status" value="3"/>
</dbReference>
<dbReference type="SUPFAM" id="SSF54534">
    <property type="entry name" value="FKBP-like"/>
    <property type="match status" value="1"/>
</dbReference>
<dbReference type="SUPFAM" id="SSF48452">
    <property type="entry name" value="TPR-like"/>
    <property type="match status" value="1"/>
</dbReference>
<dbReference type="PROSITE" id="PS50059">
    <property type="entry name" value="FKBP_PPIASE"/>
    <property type="match status" value="1"/>
</dbReference>
<dbReference type="PROSITE" id="PS50293">
    <property type="entry name" value="TPR_REGION"/>
    <property type="match status" value="1"/>
</dbReference>
<protein>
    <recommendedName>
        <fullName>Inactive peptidyl-prolyl cis-trans isomerase FKBP6</fullName>
        <shortName>Inactive PPIase FKBP6</shortName>
    </recommendedName>
    <alternativeName>
        <fullName>36 kDa FK506-binding protein</fullName>
        <shortName>36 kDa FKBP</shortName>
        <shortName>FKBP-36</shortName>
    </alternativeName>
    <alternativeName>
        <fullName>FK506-binding protein 6</fullName>
        <shortName>FKBP-6</shortName>
    </alternativeName>
    <alternativeName>
        <fullName>Immunophilin FKBP36</fullName>
    </alternativeName>
</protein>
<gene>
    <name type="primary">Fkbp6</name>
    <name type="synonym">Fkbp36</name>
</gene>
<sequence length="327" mass="37125">MGGSTRDPGALEGAGILGQSPYERLSQRMLDISGDRGVLKDIIREGTGDTVTPDASVLVKYSGYLEHMDKPFDSNCFRKTPRLMKLGEDITLWGMELGLLSMRKGELARFLFKPAYAYGTLGCPPLIPPNATVLFEIELIDFLDSAESDKFCALSAEQQEQFPLQKVLKVAATEREFGNYLFRQNRFCDAKVRYKRALLLLHRRLATCEEQHLVEPAVLLVLLNLSFVYLKLDRPAMALRYGEQALLIDKRNAKALFRCGQACLLLTEYERARDFLVRAQKEQPCNHDINNELKKLSSHYRDYVDREREMCHRMFAPCGSRSSVGGN</sequence>
<keyword id="KW-0025">Alternative splicing</keyword>
<keyword id="KW-0158">Chromosome</keyword>
<keyword id="KW-0963">Cytoplasm</keyword>
<keyword id="KW-0221">Differentiation</keyword>
<keyword id="KW-0469">Meiosis</keyword>
<keyword id="KW-0539">Nucleus</keyword>
<keyword id="KW-1185">Reference proteome</keyword>
<keyword id="KW-0677">Repeat</keyword>
<keyword id="KW-0943">RNA-mediated gene silencing</keyword>
<keyword id="KW-0744">Spermatogenesis</keyword>
<keyword id="KW-0802">TPR repeat</keyword>